<feature type="chain" id="PRO_0000121862" description="tRNA pseudouridine synthase B">
    <location>
        <begin position="1"/>
        <end position="224"/>
    </location>
</feature>
<feature type="active site" description="Nucleophile" evidence="1">
    <location>
        <position position="46"/>
    </location>
</feature>
<organism>
    <name type="scientific">Methylococcus capsulatus (strain ATCC 33009 / NCIMB 11132 / Bath)</name>
    <dbReference type="NCBI Taxonomy" id="243233"/>
    <lineage>
        <taxon>Bacteria</taxon>
        <taxon>Pseudomonadati</taxon>
        <taxon>Pseudomonadota</taxon>
        <taxon>Gammaproteobacteria</taxon>
        <taxon>Methylococcales</taxon>
        <taxon>Methylococcaceae</taxon>
        <taxon>Methylococcus</taxon>
    </lineage>
</organism>
<protein>
    <recommendedName>
        <fullName evidence="1">tRNA pseudouridine synthase B</fullName>
        <ecNumber evidence="1">5.4.99.25</ecNumber>
    </recommendedName>
    <alternativeName>
        <fullName evidence="1">tRNA pseudouridine(55) synthase</fullName>
        <shortName evidence="1">Psi55 synthase</shortName>
    </alternativeName>
    <alternativeName>
        <fullName evidence="1">tRNA pseudouridylate synthase</fullName>
    </alternativeName>
    <alternativeName>
        <fullName evidence="1">tRNA-uridine isomerase</fullName>
    </alternativeName>
</protein>
<keyword id="KW-0413">Isomerase</keyword>
<keyword id="KW-1185">Reference proteome</keyword>
<keyword id="KW-0819">tRNA processing</keyword>
<accession>Q609C2</accession>
<reference key="1">
    <citation type="journal article" date="2004" name="PLoS Biol.">
        <title>Genomic insights into methanotrophy: the complete genome sequence of Methylococcus capsulatus (Bath).</title>
        <authorList>
            <person name="Ward N.L."/>
            <person name="Larsen O."/>
            <person name="Sakwa J."/>
            <person name="Bruseth L."/>
            <person name="Khouri H.M."/>
            <person name="Durkin A.S."/>
            <person name="Dimitrov G."/>
            <person name="Jiang L."/>
            <person name="Scanlan D."/>
            <person name="Kang K.H."/>
            <person name="Lewis M.R."/>
            <person name="Nelson K.E."/>
            <person name="Methe B.A."/>
            <person name="Wu M."/>
            <person name="Heidelberg J.F."/>
            <person name="Paulsen I.T."/>
            <person name="Fouts D.E."/>
            <person name="Ravel J."/>
            <person name="Tettelin H."/>
            <person name="Ren Q."/>
            <person name="Read T.D."/>
            <person name="DeBoy R.T."/>
            <person name="Seshadri R."/>
            <person name="Salzberg S.L."/>
            <person name="Jensen H.B."/>
            <person name="Birkeland N.K."/>
            <person name="Nelson W.C."/>
            <person name="Dodson R.J."/>
            <person name="Grindhaug S.H."/>
            <person name="Holt I.E."/>
            <person name="Eidhammer I."/>
            <person name="Jonasen I."/>
            <person name="Vanaken S."/>
            <person name="Utterback T.R."/>
            <person name="Feldblyum T.V."/>
            <person name="Fraser C.M."/>
            <person name="Lillehaug J.R."/>
            <person name="Eisen J.A."/>
        </authorList>
    </citation>
    <scope>NUCLEOTIDE SEQUENCE [LARGE SCALE GENOMIC DNA]</scope>
    <source>
        <strain>ATCC 33009 / NCIMB 11132 / Bath</strain>
    </source>
</reference>
<proteinExistence type="inferred from homology"/>
<sequence length="224" mass="24287">MGAISTATLSGVLLLDKGSGMTSNSALQRARKLLDMRKAGHTGSLDPLASGILPLCFNEATKLSSYLLDSDKRYRVLARLGVTTDTGDADGEVRLRTPVPALDEPALLTVLAGFTGPILQVPPMFSALKHRGKRLYELARKGVEVERPPRPVTVFEIELAGRGADYLELDVHCSKGTYQAVEKVSIEAAMYPFAWVRGRRKPFFSAPTAAWAPPLGAARPFWAH</sequence>
<gene>
    <name evidence="1" type="primary">truB</name>
    <name type="ordered locus">MCA1313</name>
</gene>
<comment type="function">
    <text evidence="1">Responsible for synthesis of pseudouridine from uracil-55 in the psi GC loop of transfer RNAs.</text>
</comment>
<comment type="catalytic activity">
    <reaction evidence="1">
        <text>uridine(55) in tRNA = pseudouridine(55) in tRNA</text>
        <dbReference type="Rhea" id="RHEA:42532"/>
        <dbReference type="Rhea" id="RHEA-COMP:10101"/>
        <dbReference type="Rhea" id="RHEA-COMP:10102"/>
        <dbReference type="ChEBI" id="CHEBI:65314"/>
        <dbReference type="ChEBI" id="CHEBI:65315"/>
        <dbReference type="EC" id="5.4.99.25"/>
    </reaction>
</comment>
<comment type="similarity">
    <text evidence="1">Belongs to the pseudouridine synthase TruB family. Type 1 subfamily.</text>
</comment>
<name>TRUB_METCA</name>
<dbReference type="EC" id="5.4.99.25" evidence="1"/>
<dbReference type="EMBL" id="AE017282">
    <property type="protein sequence ID" value="AAU92658.1"/>
    <property type="molecule type" value="Genomic_DNA"/>
</dbReference>
<dbReference type="RefSeq" id="WP_010960594.1">
    <property type="nucleotide sequence ID" value="NC_002977.6"/>
</dbReference>
<dbReference type="SMR" id="Q609C2"/>
<dbReference type="STRING" id="243233.MCA1313"/>
<dbReference type="GeneID" id="88223596"/>
<dbReference type="KEGG" id="mca:MCA1313"/>
<dbReference type="eggNOG" id="COG0130">
    <property type="taxonomic scope" value="Bacteria"/>
</dbReference>
<dbReference type="HOGENOM" id="CLU_032087_2_2_6"/>
<dbReference type="Proteomes" id="UP000006821">
    <property type="component" value="Chromosome"/>
</dbReference>
<dbReference type="GO" id="GO:0003723">
    <property type="term" value="F:RNA binding"/>
    <property type="evidence" value="ECO:0007669"/>
    <property type="project" value="InterPro"/>
</dbReference>
<dbReference type="GO" id="GO:0160148">
    <property type="term" value="F:tRNA pseudouridine(55) synthase activity"/>
    <property type="evidence" value="ECO:0007669"/>
    <property type="project" value="UniProtKB-EC"/>
</dbReference>
<dbReference type="GO" id="GO:1990481">
    <property type="term" value="P:mRNA pseudouridine synthesis"/>
    <property type="evidence" value="ECO:0007669"/>
    <property type="project" value="TreeGrafter"/>
</dbReference>
<dbReference type="GO" id="GO:0031119">
    <property type="term" value="P:tRNA pseudouridine synthesis"/>
    <property type="evidence" value="ECO:0007669"/>
    <property type="project" value="UniProtKB-UniRule"/>
</dbReference>
<dbReference type="CDD" id="cd02573">
    <property type="entry name" value="PseudoU_synth_EcTruB"/>
    <property type="match status" value="1"/>
</dbReference>
<dbReference type="Gene3D" id="3.30.2350.10">
    <property type="entry name" value="Pseudouridine synthase"/>
    <property type="match status" value="1"/>
</dbReference>
<dbReference type="HAMAP" id="MF_01080">
    <property type="entry name" value="TruB_bact"/>
    <property type="match status" value="1"/>
</dbReference>
<dbReference type="InterPro" id="IPR020103">
    <property type="entry name" value="PsdUridine_synth_cat_dom_sf"/>
</dbReference>
<dbReference type="InterPro" id="IPR002501">
    <property type="entry name" value="PsdUridine_synth_N"/>
</dbReference>
<dbReference type="InterPro" id="IPR014780">
    <property type="entry name" value="tRNA_psdUridine_synth_TruB"/>
</dbReference>
<dbReference type="NCBIfam" id="TIGR00431">
    <property type="entry name" value="TruB"/>
    <property type="match status" value="1"/>
</dbReference>
<dbReference type="PANTHER" id="PTHR13767:SF2">
    <property type="entry name" value="PSEUDOURIDYLATE SYNTHASE TRUB1"/>
    <property type="match status" value="1"/>
</dbReference>
<dbReference type="PANTHER" id="PTHR13767">
    <property type="entry name" value="TRNA-PSEUDOURIDINE SYNTHASE"/>
    <property type="match status" value="1"/>
</dbReference>
<dbReference type="Pfam" id="PF01509">
    <property type="entry name" value="TruB_N"/>
    <property type="match status" value="1"/>
</dbReference>
<dbReference type="SUPFAM" id="SSF55120">
    <property type="entry name" value="Pseudouridine synthase"/>
    <property type="match status" value="1"/>
</dbReference>
<evidence type="ECO:0000255" key="1">
    <source>
        <dbReference type="HAMAP-Rule" id="MF_01080"/>
    </source>
</evidence>